<sequence>MDKMRTLQSLIVKLTLLYGALCMLQTENVKEINKQECIQNAVYNFNTTDSKYLDPKCVTIFMDQYRGLKNLLNYTEDQMNYIFSLERAMMRKHHINDKRHKRQAMTRPRQECRTLTDDARNNLFNTIVDLKAPSNGMSRYDTIAGLHRQAIANAHMGANFLGWHRLYLDMFEMALQETRSDVVLCYWDSTLDFLMPGTSQVNTVSFSAELFGNGRGVVINGPFRFWRLPGGRTLQRFIARPGSSLTRPGVVDLIATDPRINTNSQIVFRGQGFPDPDTGRPGHSWEDEHNNTHVWVGGVMQNVVSSPQDPVFWFHHTYVDYVWELFRQKIGPGAREQYPADASGPHAPDAPMIGFDMLQNRDGYSDEHSRMYAMHPRCSNNCGNSRFLLCPNNGPMADPNRRCVSRAVNSDMVPAAAISAPEAAGFSAMSPMGAFGPAAVGPSSVGRMASRSGAARVSLQATDTVAIRAAMSEPPLQLEGPSFTSSFDDPRI</sequence>
<comment type="cofactor">
    <cofactor evidence="1">
        <name>Cu(2+)</name>
        <dbReference type="ChEBI" id="CHEBI:29036"/>
    </cofactor>
    <text evidence="1">Binds 2 copper ions per subunit.</text>
</comment>
<comment type="subcellular location">
    <subcellularLocation>
        <location evidence="4">Secreted</location>
    </subcellularLocation>
</comment>
<comment type="tissue specificity">
    <text evidence="4">Prismatic layer of shell (at protein level). Expressed primarily in the mantle with highest level in the mantle edge and lower level in the mantle pallium.</text>
</comment>
<evidence type="ECO:0000250" key="1">
    <source>
        <dbReference type="UniProtKB" id="P06845"/>
    </source>
</evidence>
<evidence type="ECO:0000255" key="2"/>
<evidence type="ECO:0000256" key="3">
    <source>
        <dbReference type="SAM" id="MobiDB-lite"/>
    </source>
</evidence>
<evidence type="ECO:0000269" key="4">
    <source>
    </source>
</evidence>
<evidence type="ECO:0000305" key="5"/>
<reference evidence="5" key="1">
    <citation type="journal article" date="2010" name="BMC Genomics">
        <title>Transcriptome and proteome analysis of Pinctada margaritifera calcifying mantle and shell: focus on biomineralization.</title>
        <authorList>
            <person name="Joubert C."/>
            <person name="Piquemal D."/>
            <person name="Marie B."/>
            <person name="Manchon L."/>
            <person name="Pierrat F."/>
            <person name="Zanella-Cleon I."/>
            <person name="Cochennec-Laureau N."/>
            <person name="Gueguen Y."/>
            <person name="Montagnani C."/>
        </authorList>
    </citation>
    <scope>NUCLEOTIDE SEQUENCE [MRNA]</scope>
    <scope>IDENTIFICATION</scope>
    <source>
        <tissue>Mantle</tissue>
    </source>
</reference>
<reference key="2">
    <citation type="journal article" date="2012" name="Proc. Natl. Acad. Sci. U.S.A.">
        <title>Different secretory repertoires control the biomineralization processes of prism and nacre deposition of the pearl oyster shell.</title>
        <authorList>
            <person name="Marie B."/>
            <person name="Joubert C."/>
            <person name="Tayale A."/>
            <person name="Zanella-Cleon I."/>
            <person name="Belliard C."/>
            <person name="Piquemal D."/>
            <person name="Cochennec-Laureau N."/>
            <person name="Marin F."/>
            <person name="Gueguen Y."/>
            <person name="Montagnani C."/>
        </authorList>
    </citation>
    <scope>PROTEIN SEQUENCE OF 121-131 AND 458-469</scope>
    <scope>SUBCELLULAR LOCATION</scope>
    <scope>TISSUE SPECIFICITY</scope>
    <source>
        <tissue>Shell</tissue>
    </source>
</reference>
<feature type="signal peptide" evidence="2">
    <location>
        <begin position="1"/>
        <end position="22"/>
    </location>
</feature>
<feature type="chain" id="PRO_0000417979" description="Tyrosinase-like protein 1" evidence="2">
    <location>
        <begin position="23"/>
        <end position="492"/>
    </location>
</feature>
<feature type="region of interest" description="Disordered" evidence="3">
    <location>
        <begin position="472"/>
        <end position="492"/>
    </location>
</feature>
<feature type="compositionally biased region" description="Polar residues" evidence="3">
    <location>
        <begin position="482"/>
        <end position="492"/>
    </location>
</feature>
<feature type="binding site" evidence="1">
    <location>
        <position position="147"/>
    </location>
    <ligand>
        <name>Cu cation</name>
        <dbReference type="ChEBI" id="CHEBI:23378"/>
        <label>A</label>
    </ligand>
</feature>
<feature type="binding site" evidence="1">
    <location>
        <position position="155"/>
    </location>
    <ligand>
        <name>Cu cation</name>
        <dbReference type="ChEBI" id="CHEBI:23378"/>
        <label>A</label>
    </ligand>
</feature>
<feature type="binding site" evidence="1">
    <location>
        <position position="164"/>
    </location>
    <ligand>
        <name>Cu cation</name>
        <dbReference type="ChEBI" id="CHEBI:23378"/>
        <label>A</label>
    </ligand>
</feature>
<feature type="binding site" evidence="1">
    <location>
        <position position="289"/>
    </location>
    <ligand>
        <name>Cu cation</name>
        <dbReference type="ChEBI" id="CHEBI:23378"/>
        <label>B</label>
    </ligand>
</feature>
<feature type="binding site" evidence="1">
    <location>
        <position position="293"/>
    </location>
    <ligand>
        <name>Cu cation</name>
        <dbReference type="ChEBI" id="CHEBI:23378"/>
        <label>B</label>
    </ligand>
</feature>
<feature type="binding site" evidence="1">
    <location>
        <position position="316"/>
    </location>
    <ligand>
        <name>Cu cation</name>
        <dbReference type="ChEBI" id="CHEBI:23378"/>
        <label>B</label>
    </ligand>
</feature>
<name>TYRO1_PINMG</name>
<keyword id="KW-0186">Copper</keyword>
<keyword id="KW-0903">Direct protein sequencing</keyword>
<keyword id="KW-0479">Metal-binding</keyword>
<keyword id="KW-0560">Oxidoreductase</keyword>
<keyword id="KW-0964">Secreted</keyword>
<keyword id="KW-0732">Signal</keyword>
<dbReference type="EC" id="1.14.18.-"/>
<dbReference type="EMBL" id="HE610377">
    <property type="protein sequence ID" value="CCE46151.1"/>
    <property type="molecule type" value="mRNA"/>
</dbReference>
<dbReference type="SMR" id="H2A0L0"/>
<dbReference type="GO" id="GO:0005576">
    <property type="term" value="C:extracellular region"/>
    <property type="evidence" value="ECO:0007669"/>
    <property type="project" value="UniProtKB-SubCell"/>
</dbReference>
<dbReference type="GO" id="GO:0046872">
    <property type="term" value="F:metal ion binding"/>
    <property type="evidence" value="ECO:0007669"/>
    <property type="project" value="UniProtKB-KW"/>
</dbReference>
<dbReference type="GO" id="GO:0016491">
    <property type="term" value="F:oxidoreductase activity"/>
    <property type="evidence" value="ECO:0007669"/>
    <property type="project" value="UniProtKB-KW"/>
</dbReference>
<dbReference type="Gene3D" id="1.10.1280.10">
    <property type="entry name" value="Di-copper center containing domain from catechol oxidase"/>
    <property type="match status" value="1"/>
</dbReference>
<dbReference type="InterPro" id="IPR008922">
    <property type="entry name" value="Di-copper_centre_dom_sf"/>
</dbReference>
<dbReference type="InterPro" id="IPR050316">
    <property type="entry name" value="Tyrosinase/Hemocyanin"/>
</dbReference>
<dbReference type="InterPro" id="IPR002227">
    <property type="entry name" value="Tyrosinase_Cu-bd"/>
</dbReference>
<dbReference type="PANTHER" id="PTHR11474">
    <property type="entry name" value="TYROSINASE FAMILY MEMBER"/>
    <property type="match status" value="1"/>
</dbReference>
<dbReference type="PANTHER" id="PTHR11474:SF126">
    <property type="entry name" value="TYROSINASE-LIKE PROTEIN TYR-1-RELATED"/>
    <property type="match status" value="1"/>
</dbReference>
<dbReference type="Pfam" id="PF00264">
    <property type="entry name" value="Tyrosinase"/>
    <property type="match status" value="1"/>
</dbReference>
<dbReference type="PRINTS" id="PR00092">
    <property type="entry name" value="TYROSINASE"/>
</dbReference>
<dbReference type="SUPFAM" id="SSF48056">
    <property type="entry name" value="Di-copper centre-containing domain"/>
    <property type="match status" value="1"/>
</dbReference>
<dbReference type="PROSITE" id="PS00497">
    <property type="entry name" value="TYROSINASE_1"/>
    <property type="match status" value="1"/>
</dbReference>
<dbReference type="PROSITE" id="PS00498">
    <property type="entry name" value="TYROSINASE_2"/>
    <property type="match status" value="1"/>
</dbReference>
<accession>H2A0L0</accession>
<protein>
    <recommendedName>
        <fullName>Tyrosinase-like protein 1</fullName>
        <ecNumber>1.14.18.-</ecNumber>
    </recommendedName>
    <alternativeName>
        <fullName>Tyrosinase 1</fullName>
    </alternativeName>
</protein>
<organism>
    <name type="scientific">Margaritifera margaritifera</name>
    <name type="common">Freshwater pearl mussel</name>
    <dbReference type="NCBI Taxonomy" id="102329"/>
    <lineage>
        <taxon>Eukaryota</taxon>
        <taxon>Metazoa</taxon>
        <taxon>Spiralia</taxon>
        <taxon>Lophotrochozoa</taxon>
        <taxon>Mollusca</taxon>
        <taxon>Bivalvia</taxon>
        <taxon>Autobranchia</taxon>
        <taxon>Pteriomorphia</taxon>
        <taxon>Pterioida</taxon>
        <taxon>Pterioidea</taxon>
        <taxon>Pteriidae</taxon>
        <taxon>Pinctada</taxon>
    </lineage>
</organism>
<proteinExistence type="evidence at protein level"/>